<feature type="signal peptide" evidence="2">
    <location>
        <begin position="1"/>
        <end position="41"/>
    </location>
</feature>
<feature type="chain" id="PRO_0000007899" description="Beta-mannanase/endoglucanase A">
    <location>
        <begin position="42"/>
        <end position="1331"/>
    </location>
</feature>
<feature type="domain" description="CBM3 1" evidence="3">
    <location>
        <begin position="363"/>
        <end position="516"/>
    </location>
</feature>
<feature type="domain" description="CBM3 2" evidence="3">
    <location>
        <begin position="566"/>
        <end position="719"/>
    </location>
</feature>
<feature type="region of interest" description="Catalytic (mannanase)">
    <location>
        <begin position="42"/>
        <end position="325"/>
    </location>
</feature>
<feature type="region of interest" description="Disordered" evidence="4">
    <location>
        <begin position="319"/>
        <end position="363"/>
    </location>
</feature>
<feature type="region of interest" description="Disordered" evidence="4">
    <location>
        <begin position="515"/>
        <end position="566"/>
    </location>
</feature>
<feature type="region of interest" description="Disordered" evidence="4">
    <location>
        <begin position="717"/>
        <end position="780"/>
    </location>
</feature>
<feature type="region of interest" description="Catalytic (endoglucanase)">
    <location>
        <begin position="781"/>
        <end position="1331"/>
    </location>
</feature>
<feature type="compositionally biased region" description="Low complexity" evidence="4">
    <location>
        <begin position="323"/>
        <end position="335"/>
    </location>
</feature>
<feature type="compositionally biased region" description="Pro residues" evidence="4">
    <location>
        <begin position="521"/>
        <end position="541"/>
    </location>
</feature>
<feature type="compositionally biased region" description="Pro residues" evidence="4">
    <location>
        <begin position="551"/>
        <end position="561"/>
    </location>
</feature>
<feature type="compositionally biased region" description="Low complexity" evidence="4">
    <location>
        <begin position="721"/>
        <end position="735"/>
    </location>
</feature>
<feature type="compositionally biased region" description="Pro residues" evidence="4">
    <location>
        <begin position="736"/>
        <end position="756"/>
    </location>
</feature>
<feature type="compositionally biased region" description="Pro residues" evidence="4">
    <location>
        <begin position="766"/>
        <end position="780"/>
    </location>
</feature>
<feature type="active site" description="Proton donor" evidence="1">
    <location>
        <position position="162"/>
    </location>
</feature>
<feature type="active site" description="Nucleophile" evidence="1">
    <location>
        <position position="257"/>
    </location>
</feature>
<feature type="sequence conflict" description="In Ref. 2." evidence="5" ref="2">
    <original>T</original>
    <variation>P</variation>
    <location>
        <position position="338"/>
    </location>
</feature>
<feature type="sequence conflict" description="In Ref. 2." evidence="5" ref="2">
    <original>TPTPTPT</original>
    <variation>RQHQHRQ</variation>
    <location>
        <begin position="340"/>
        <end position="346"/>
    </location>
</feature>
<evidence type="ECO:0000250" key="1"/>
<evidence type="ECO:0000255" key="2"/>
<evidence type="ECO:0000255" key="3">
    <source>
        <dbReference type="PROSITE-ProRule" id="PRU00513"/>
    </source>
</evidence>
<evidence type="ECO:0000256" key="4">
    <source>
        <dbReference type="SAM" id="MobiDB-lite"/>
    </source>
</evidence>
<evidence type="ECO:0000305" key="5"/>
<proteinExistence type="evidence at protein level"/>
<accession>P22533</accession>
<protein>
    <recommendedName>
        <fullName>Beta-mannanase/endoglucanase A</fullName>
    </recommendedName>
    <domain>
        <recommendedName>
            <fullName>Mannan endo-1,4-beta-mannosidase A</fullName>
            <ecNumber>3.2.1.78</ecNumber>
        </recommendedName>
        <alternativeName>
            <fullName>Beta-mannanase</fullName>
        </alternativeName>
        <alternativeName>
            <fullName>Endo-1,4-mannanase</fullName>
        </alternativeName>
    </domain>
    <domain>
        <recommendedName>
            <fullName>Endo-1,4-beta-glucanase</fullName>
            <ecNumber>3.2.1.4</ecNumber>
        </recommendedName>
        <alternativeName>
            <fullName>Cellulase</fullName>
        </alternativeName>
    </domain>
</protein>
<comment type="function">
    <text>Degradation of hemicelluloses, the second most abundant polysaccharides in nature. Contains two catalytic domains with mannanase and endoglucanase activities.</text>
</comment>
<comment type="catalytic activity">
    <reaction>
        <text>Random hydrolysis of (1-&gt;4)-beta-D-mannosidic linkages in mannans, galactomannans and glucomannans.</text>
        <dbReference type="EC" id="3.2.1.78"/>
    </reaction>
</comment>
<comment type="catalytic activity">
    <reaction>
        <text>Endohydrolysis of (1-&gt;4)-beta-D-glucosidic linkages in cellulose, lichenin and cereal beta-D-glucans.</text>
        <dbReference type="EC" id="3.2.1.4"/>
    </reaction>
</comment>
<comment type="biophysicochemical properties">
    <phDependence>
        <text>Optimum pH is 6.</text>
    </phDependence>
    <temperatureDependence>
        <text>Optimum temperature is 80 degrees Celsius.</text>
    </temperatureDependence>
</comment>
<comment type="similarity">
    <text evidence="5">In the N-terminal section; belongs to the glycosyl hydrolase 5 (cellulase A) family.</text>
</comment>
<comment type="similarity">
    <text evidence="5">In the C-terminal section; belongs to the glycosyl hydrolase 44 (cellulase J) family.</text>
</comment>
<sequence>MRLKTKIRKKWLSVLCTVVFLLNILFIANVTILPKVGAATSNDGVVKIDTSTLIGTNHAHCWYRDRLDTALRGIRSWGMNSVRVVLSNGYRWTKIPASEVANIISLSRSLGFKAIILEVHDTTGYGEDGAACSLAQAVEYWKEIKSVLDGNEDFVIINIGNEPYGNNNYQNWVNDTKNAIKALRDAGFKHTIMVDAPNWGQDWSNTMRDNAQSIMEADPLRNLVFSIHMYGVYNTASKVEEYIKSFVDKGLPLVIGEFGHQHTDGDPDEEAIVRYAKQYKIGLFSWSWCGNSSYVGYLDMVNNWDPNNPTPWGQWYKTNAIGTSSTPTPTSTVTPTPTPTPTPTPTVTATPTPTPTPVSTPATSGQIKVLYANKETNSTTNTIRPWLKVVNSGSSSIDLSRVTIRYWYTVDGERAQSAISDWAQIGASNVTFKFVKLSSSVSGADYYLEIGFKSGAGQLQPGKDTGEIQMRFNKDDWSNYNQGNDWSWIQSMTSYGENEKVTAYIDGVLVWGQEPSGATPAPAPTATPTPTPTVTPTPTVTPTPTVTATPTPTPTPTPTPVSTPATGGQIKVLYANKETNSTTNTIRPWLKVVNSGSSSIDLSRVTIRYWYTVDGERAQSAISDWAQIGASNVTFKFVKLSSSVSGADYYLEIGFKSGAGQLQPGKDTGEIQIRFNKSDWSNYNQGNDWSWIQSMTSYGENEKVTAYIDGVLVWGQEPSGTTPSPTSTPTVTVTPTPTPTPTPTPTPTVTPTPTVTPTPTVTATPTPTPTPIPTVTPLPTISPSPSVVEITINTNAGRTQISPYIYGANQDIEGVVHSARRLGGNRLTGYNWENNFSNAGNDWYHSSDDYLCWSMGISGEDAKVPAAVVSKFHEYSLKNNAYSAVTLQMAGYVSKDNYGTVSENETAPSNRWAEVKFKKDAPLSLNPDLNDNFVYMDEFINYLINKYGMASSPTGIKGYILDNEPDLWASTHPRIHPNKVTCKELIEKSVELAKVIKTLDPSAEVFGYASYGFMGYYSLQDAPDWNQVKGEHRWFISWYLEQMKKASDSFGKRLLDVLDLHWYPEARGGNIRVCFDGENDTSKEVVIARMQAPRTLWDPTYKTSVKGQITAGENSWINQWFSDYLPIIPNVKADIEKYYPGTKLAISEFDYGGRNHISGGIALADVLGIFGKYGVNFAARWGDSGSYAAAAYNIYLNYDGKGSKYGNTNVSANTSDVENMPVYASINGQDDSELHIILINRNYDQKLQVKINITSTPKYTKAEIYGFDSNSPEYKKMGNIDNIESNVFTLEVPKFNGVSHSITLDFNVSIKIIQNEVIKFIRNLVFMRALV</sequence>
<keyword id="KW-0119">Carbohydrate metabolism</keyword>
<keyword id="KW-0136">Cellulose degradation</keyword>
<keyword id="KW-0326">Glycosidase</keyword>
<keyword id="KW-0378">Hydrolase</keyword>
<keyword id="KW-0511">Multifunctional enzyme</keyword>
<keyword id="KW-0624">Polysaccharide degradation</keyword>
<keyword id="KW-0677">Repeat</keyword>
<keyword id="KW-0732">Signal</keyword>
<reference key="1">
    <citation type="journal article" date="1992" name="Appl. Environ. Microbiol.">
        <title>The beta-mannanase from 'Caldocellum saccharolyticum' is part of a multidomain enzyme.</title>
        <authorList>
            <person name="Gibbs M.D."/>
            <person name="Saul D.J."/>
            <person name="Luthi E."/>
            <person name="Bergquist P.L."/>
        </authorList>
    </citation>
    <scope>NUCLEOTIDE SEQUENCE [GENOMIC DNA]</scope>
</reference>
<reference key="2">
    <citation type="journal article" date="1991" name="Appl. Environ. Microbiol.">
        <title>Cloning, sequence analysis, and expression in Escherichia coli of a gene coding for a beta-mannanase from the extremely thermophilic bacterium 'Caldocellum saccharolyticum'.</title>
        <authorList>
            <person name="Luethi E."/>
            <person name="Jasmat N.B."/>
            <person name="Grayling R.A."/>
            <person name="Love D.R."/>
            <person name="Bergquist P.L."/>
        </authorList>
    </citation>
    <scope>NUCLEOTIDE SEQUENCE [GENOMIC DNA] OF 1-346</scope>
</reference>
<name>MANB_CALSA</name>
<dbReference type="EC" id="3.2.1.78"/>
<dbReference type="EC" id="3.2.1.4"/>
<dbReference type="EMBL" id="L01257">
    <property type="protein sequence ID" value="AAA71887.1"/>
    <property type="molecule type" value="Unassigned_DNA"/>
</dbReference>
<dbReference type="EMBL" id="M36063">
    <property type="protein sequence ID" value="AAA72861.1"/>
    <property type="molecule type" value="Genomic_DNA"/>
</dbReference>
<dbReference type="PIR" id="A48954">
    <property type="entry name" value="A48954"/>
</dbReference>
<dbReference type="SMR" id="P22533"/>
<dbReference type="CAZy" id="CBM3">
    <property type="family name" value="Carbohydrate-Binding Module Family 3"/>
</dbReference>
<dbReference type="CAZy" id="GH44">
    <property type="family name" value="Glycoside Hydrolase Family 44"/>
</dbReference>
<dbReference type="CAZy" id="GH5">
    <property type="family name" value="Glycoside Hydrolase Family 5"/>
</dbReference>
<dbReference type="BRENDA" id="3.2.1.78">
    <property type="organism ID" value="1055"/>
</dbReference>
<dbReference type="GO" id="GO:0008810">
    <property type="term" value="F:cellulase activity"/>
    <property type="evidence" value="ECO:0007669"/>
    <property type="project" value="UniProtKB-EC"/>
</dbReference>
<dbReference type="GO" id="GO:0030248">
    <property type="term" value="F:cellulose binding"/>
    <property type="evidence" value="ECO:0007669"/>
    <property type="project" value="InterPro"/>
</dbReference>
<dbReference type="GO" id="GO:0016985">
    <property type="term" value="F:mannan endo-1,4-beta-mannosidase activity"/>
    <property type="evidence" value="ECO:0007669"/>
    <property type="project" value="UniProtKB-EC"/>
</dbReference>
<dbReference type="GO" id="GO:0030245">
    <property type="term" value="P:cellulose catabolic process"/>
    <property type="evidence" value="ECO:0007669"/>
    <property type="project" value="UniProtKB-KW"/>
</dbReference>
<dbReference type="Gene3D" id="2.60.40.710">
    <property type="entry name" value="Endoglucanase-like"/>
    <property type="match status" value="2"/>
</dbReference>
<dbReference type="Gene3D" id="3.20.20.80">
    <property type="entry name" value="Glycosidases"/>
    <property type="match status" value="2"/>
</dbReference>
<dbReference type="Gene3D" id="2.60.40.1180">
    <property type="entry name" value="Golgi alpha-mannosidase II"/>
    <property type="match status" value="1"/>
</dbReference>
<dbReference type="InterPro" id="IPR008965">
    <property type="entry name" value="CBM2/CBM3_carb-bd_dom_sf"/>
</dbReference>
<dbReference type="InterPro" id="IPR001956">
    <property type="entry name" value="CBM3"/>
</dbReference>
<dbReference type="InterPro" id="IPR036966">
    <property type="entry name" value="CBM3_sf"/>
</dbReference>
<dbReference type="InterPro" id="IPR024745">
    <property type="entry name" value="GH44_cat"/>
</dbReference>
<dbReference type="InterPro" id="IPR001547">
    <property type="entry name" value="Glyco_hydro_5"/>
</dbReference>
<dbReference type="InterPro" id="IPR018087">
    <property type="entry name" value="Glyco_hydro_5_CS"/>
</dbReference>
<dbReference type="InterPro" id="IPR013780">
    <property type="entry name" value="Glyco_hydro_b"/>
</dbReference>
<dbReference type="InterPro" id="IPR017853">
    <property type="entry name" value="Glycoside_hydrolase_SF"/>
</dbReference>
<dbReference type="PANTHER" id="PTHR34142">
    <property type="entry name" value="ENDO-BETA-1,4-GLUCANASE A"/>
    <property type="match status" value="1"/>
</dbReference>
<dbReference type="PANTHER" id="PTHR34142:SF1">
    <property type="entry name" value="GLYCOSIDE HYDROLASE FAMILY 5 DOMAIN-CONTAINING PROTEIN"/>
    <property type="match status" value="1"/>
</dbReference>
<dbReference type="Pfam" id="PF00942">
    <property type="entry name" value="CBM_3"/>
    <property type="match status" value="2"/>
</dbReference>
<dbReference type="Pfam" id="PF00150">
    <property type="entry name" value="Cellulase"/>
    <property type="match status" value="1"/>
</dbReference>
<dbReference type="Pfam" id="PF12891">
    <property type="entry name" value="Glyco_hydro_44"/>
    <property type="match status" value="1"/>
</dbReference>
<dbReference type="SMART" id="SM01067">
    <property type="entry name" value="CBM_3"/>
    <property type="match status" value="2"/>
</dbReference>
<dbReference type="SUPFAM" id="SSF51445">
    <property type="entry name" value="(Trans)glycosidases"/>
    <property type="match status" value="2"/>
</dbReference>
<dbReference type="SUPFAM" id="SSF49384">
    <property type="entry name" value="Carbohydrate-binding domain"/>
    <property type="match status" value="2"/>
</dbReference>
<dbReference type="PROSITE" id="PS51172">
    <property type="entry name" value="CBM3"/>
    <property type="match status" value="2"/>
</dbReference>
<dbReference type="PROSITE" id="PS00659">
    <property type="entry name" value="GLYCOSYL_HYDROL_F5"/>
    <property type="match status" value="1"/>
</dbReference>
<organism>
    <name type="scientific">Caldicellulosiruptor saccharolyticus</name>
    <name type="common">Caldocellum saccharolyticum</name>
    <dbReference type="NCBI Taxonomy" id="44001"/>
    <lineage>
        <taxon>Bacteria</taxon>
        <taxon>Bacillati</taxon>
        <taxon>Bacillota</taxon>
        <taxon>Bacillota incertae sedis</taxon>
        <taxon>Caldicellulosiruptorales</taxon>
        <taxon>Caldicellulosiruptoraceae</taxon>
        <taxon>Caldicellulosiruptor</taxon>
    </lineage>
</organism>
<gene>
    <name type="primary">manA</name>
</gene>